<keyword id="KW-0255">Endonuclease</keyword>
<keyword id="KW-0378">Hydrolase</keyword>
<keyword id="KW-0472">Membrane</keyword>
<keyword id="KW-0540">Nuclease</keyword>
<keyword id="KW-0732">Signal</keyword>
<keyword id="KW-0812">Transmembrane</keyword>
<keyword id="KW-1133">Transmembrane helix</keyword>
<protein>
    <recommendedName>
        <fullName>Ribonuclease kappa-A</fullName>
        <shortName>RNase K-A</shortName>
        <shortName>RNase kappa-A</shortName>
        <ecNumber>3.1.-.-</ecNumber>
    </recommendedName>
</protein>
<evidence type="ECO:0000255" key="1"/>
<evidence type="ECO:0000269" key="2">
    <source>
    </source>
</evidence>
<evidence type="ECO:0000305" key="3"/>
<feature type="signal peptide" evidence="1">
    <location>
        <begin position="1"/>
        <end position="24"/>
    </location>
</feature>
<feature type="chain" id="PRO_5000147249" description="Ribonuclease kappa-A">
    <location>
        <begin position="25"/>
        <end position="138"/>
    </location>
</feature>
<feature type="topological domain" description="Extracellular" evidence="1">
    <location>
        <begin position="25"/>
        <end position="75"/>
    </location>
</feature>
<feature type="transmembrane region" description="Helical" evidence="1">
    <location>
        <begin position="76"/>
        <end position="96"/>
    </location>
</feature>
<feature type="topological domain" description="Cytoplasmic" evidence="1">
    <location>
        <begin position="97"/>
        <end position="138"/>
    </location>
</feature>
<reference key="1">
    <citation type="journal article" date="2000" name="Insect Biochem. Mol. Biol.">
        <title>Isolation and sequencing of a cDNA encoding for a ribonuclease from the insect Ceratitis capitata.</title>
        <authorList>
            <person name="Sideris D.C."/>
            <person name="Rampias T.N."/>
            <person name="Fragoulis E.G."/>
        </authorList>
    </citation>
    <scope>NUCLEOTIDE SEQUENCE [MRNA]</scope>
    <scope>FUNCTION</scope>
    <scope>ENZYME ACTIVITY</scope>
</reference>
<name>RNKA_CERCA</name>
<comment type="function">
    <text evidence="2">Endoribonuclease.</text>
</comment>
<comment type="subcellular location">
    <subcellularLocation>
        <location evidence="3">Membrane</location>
        <topology evidence="3">Single-pass type I membrane protein</topology>
    </subcellularLocation>
</comment>
<comment type="similarity">
    <text evidence="3">Belongs to the RNase K family.</text>
</comment>
<sequence length="138" mass="15925">MVLYFSPVLTFFLANFFNSKSTTTENLQVFLVENQHRDSKRKINPTFSKKGIEVRQQNENLWSKIVALRFDYSVWGIIQLVLMMGLFFYINSVALIEDLPIDEEFNSVEEFYTAATSAYNQNAYTVGLPVHLCAYASI</sequence>
<proteinExistence type="evidence at transcript level"/>
<organism>
    <name type="scientific">Ceratitis capitata</name>
    <name type="common">Mediterranean fruit fly</name>
    <name type="synonym">Tephritis capitata</name>
    <dbReference type="NCBI Taxonomy" id="7213"/>
    <lineage>
        <taxon>Eukaryota</taxon>
        <taxon>Metazoa</taxon>
        <taxon>Ecdysozoa</taxon>
        <taxon>Arthropoda</taxon>
        <taxon>Hexapoda</taxon>
        <taxon>Insecta</taxon>
        <taxon>Pterygota</taxon>
        <taxon>Neoptera</taxon>
        <taxon>Endopterygota</taxon>
        <taxon>Diptera</taxon>
        <taxon>Brachycera</taxon>
        <taxon>Muscomorpha</taxon>
        <taxon>Tephritoidea</taxon>
        <taxon>Tephritidae</taxon>
        <taxon>Ceratitis</taxon>
        <taxon>Ceratitis</taxon>
    </lineage>
</organism>
<dbReference type="EC" id="3.1.-.-"/>
<dbReference type="EMBL" id="Y15384">
    <property type="protein sequence ID" value="CAB77385.1"/>
    <property type="molecule type" value="mRNA"/>
</dbReference>
<dbReference type="SMR" id="Q9NDV2"/>
<dbReference type="OrthoDB" id="67317at2759"/>
<dbReference type="GO" id="GO:0016020">
    <property type="term" value="C:membrane"/>
    <property type="evidence" value="ECO:0007669"/>
    <property type="project" value="UniProtKB-SubCell"/>
</dbReference>
<dbReference type="GO" id="GO:0004521">
    <property type="term" value="F:RNA endonuclease activity"/>
    <property type="evidence" value="ECO:0000250"/>
    <property type="project" value="UniProtKB"/>
</dbReference>
<accession>Q9NDV2</accession>